<proteinExistence type="evidence at protein level"/>
<evidence type="ECO:0000250" key="1">
    <source>
        <dbReference type="UniProtKB" id="P49789"/>
    </source>
</evidence>
<evidence type="ECO:0000255" key="2">
    <source>
        <dbReference type="PROSITE-ProRule" id="PRU00464"/>
    </source>
</evidence>
<evidence type="ECO:0000269" key="3">
    <source>
    </source>
</evidence>
<evidence type="ECO:0000269" key="4">
    <source>
    </source>
</evidence>
<evidence type="ECO:0000303" key="5">
    <source>
    </source>
</evidence>
<evidence type="ECO:0000305" key="6"/>
<evidence type="ECO:0000305" key="7">
    <source>
    </source>
</evidence>
<evidence type="ECO:0000312" key="8">
    <source>
        <dbReference type="Araport" id="AT4G16566"/>
    </source>
</evidence>
<evidence type="ECO:0000312" key="9">
    <source>
        <dbReference type="EMBL" id="CAB10432.1"/>
    </source>
</evidence>
<name>HINT4_ARATH</name>
<accession>Q84VV6</accession>
<accession>O23500</accession>
<accession>Q8L9E2</accession>
<sequence>MAGVNQACIFCEIVRNPTTTRLLHTDEKVIAFQDIKPAAQRHYLVIPKEHIPTVNDLQRRDEDYSLVRHMLSVGQQLLQKDAPQSIHRFGFHQPPFNSVDHLHLHCFALPYVPRWKAIKYKSLGPLGGFIEAETLLEKIRPLLSKV</sequence>
<organism>
    <name type="scientific">Arabidopsis thaliana</name>
    <name type="common">Mouse-ear cress</name>
    <dbReference type="NCBI Taxonomy" id="3702"/>
    <lineage>
        <taxon>Eukaryota</taxon>
        <taxon>Viridiplantae</taxon>
        <taxon>Streptophyta</taxon>
        <taxon>Embryophyta</taxon>
        <taxon>Tracheophyta</taxon>
        <taxon>Spermatophyta</taxon>
        <taxon>Magnoliopsida</taxon>
        <taxon>eudicotyledons</taxon>
        <taxon>Gunneridae</taxon>
        <taxon>Pentapetalae</taxon>
        <taxon>rosids</taxon>
        <taxon>malvids</taxon>
        <taxon>Brassicales</taxon>
        <taxon>Brassicaceae</taxon>
        <taxon>Camelineae</taxon>
        <taxon>Arabidopsis</taxon>
    </lineage>
</organism>
<gene>
    <name evidence="5" type="primary">HINT4</name>
    <name evidence="8" type="ordered locus">At4g16566</name>
    <name evidence="9" type="ORF">dl4305c</name>
</gene>
<protein>
    <recommendedName>
        <fullName evidence="7">Bifunctional adenosine 5'-phosphosulfate phosphorylase/adenylylsulfatase HINT4</fullName>
        <shortName evidence="7">APS phosphorylase</shortName>
        <ecNumber evidence="4">2.7.7.5</ecNumber>
        <ecNumber evidence="4">3.6.2.1</ecNumber>
    </recommendedName>
    <alternativeName>
        <fullName evidence="7">5'-adenylyl sulfate phosphorylase HINT4</fullName>
    </alternativeName>
    <alternativeName>
        <fullName evidence="7">Adenylylsulfate:phosphate adenylyltransferase HINT4</fullName>
    </alternativeName>
    <alternativeName>
        <fullName evidence="6">Histidine triad nucleotide-binding protein 4</fullName>
    </alternativeName>
</protein>
<reference key="1">
    <citation type="journal article" date="1998" name="Nature">
        <title>Analysis of 1.9 Mb of contiguous sequence from chromosome 4 of Arabidopsis thaliana.</title>
        <authorList>
            <person name="Bevan M."/>
            <person name="Bancroft I."/>
            <person name="Bent E."/>
            <person name="Love K."/>
            <person name="Goodman H.M."/>
            <person name="Dean C."/>
            <person name="Bergkamp R."/>
            <person name="Dirkse W."/>
            <person name="van Staveren M."/>
            <person name="Stiekema W."/>
            <person name="Drost L."/>
            <person name="Ridley P."/>
            <person name="Hudson S.-A."/>
            <person name="Patel K."/>
            <person name="Murphy G."/>
            <person name="Piffanelli P."/>
            <person name="Wedler H."/>
            <person name="Wedler E."/>
            <person name="Wambutt R."/>
            <person name="Weitzenegger T."/>
            <person name="Pohl T."/>
            <person name="Terryn N."/>
            <person name="Gielen J."/>
            <person name="Villarroel R."/>
            <person name="De Clercq R."/>
            <person name="van Montagu M."/>
            <person name="Lecharny A."/>
            <person name="Aubourg S."/>
            <person name="Gy I."/>
            <person name="Kreis M."/>
            <person name="Lao N."/>
            <person name="Kavanagh T."/>
            <person name="Hempel S."/>
            <person name="Kotter P."/>
            <person name="Entian K.-D."/>
            <person name="Rieger M."/>
            <person name="Schaefer M."/>
            <person name="Funk B."/>
            <person name="Mueller-Auer S."/>
            <person name="Silvey M."/>
            <person name="James R."/>
            <person name="Monfort A."/>
            <person name="Pons A."/>
            <person name="Puigdomenech P."/>
            <person name="Douka A."/>
            <person name="Voukelatou E."/>
            <person name="Milioni D."/>
            <person name="Hatzopoulos P."/>
            <person name="Piravandi E."/>
            <person name="Obermaier B."/>
            <person name="Hilbert H."/>
            <person name="Duesterhoeft A."/>
            <person name="Moores T."/>
            <person name="Jones J.D.G."/>
            <person name="Eneva T."/>
            <person name="Palme K."/>
            <person name="Benes V."/>
            <person name="Rechmann S."/>
            <person name="Ansorge W."/>
            <person name="Cooke R."/>
            <person name="Berger C."/>
            <person name="Delseny M."/>
            <person name="Voet M."/>
            <person name="Volckaert G."/>
            <person name="Mewes H.-W."/>
            <person name="Klosterman S."/>
            <person name="Schueller C."/>
            <person name="Chalwatzis N."/>
        </authorList>
    </citation>
    <scope>NUCLEOTIDE SEQUENCE [LARGE SCALE GENOMIC DNA]</scope>
    <source>
        <strain>cv. Columbia</strain>
    </source>
</reference>
<reference key="2">
    <citation type="journal article" date="1999" name="Nature">
        <title>Sequence and analysis of chromosome 4 of the plant Arabidopsis thaliana.</title>
        <authorList>
            <person name="Mayer K.F.X."/>
            <person name="Schueller C."/>
            <person name="Wambutt R."/>
            <person name="Murphy G."/>
            <person name="Volckaert G."/>
            <person name="Pohl T."/>
            <person name="Duesterhoeft A."/>
            <person name="Stiekema W."/>
            <person name="Entian K.-D."/>
            <person name="Terryn N."/>
            <person name="Harris B."/>
            <person name="Ansorge W."/>
            <person name="Brandt P."/>
            <person name="Grivell L.A."/>
            <person name="Rieger M."/>
            <person name="Weichselgartner M."/>
            <person name="de Simone V."/>
            <person name="Obermaier B."/>
            <person name="Mache R."/>
            <person name="Mueller M."/>
            <person name="Kreis M."/>
            <person name="Delseny M."/>
            <person name="Puigdomenech P."/>
            <person name="Watson M."/>
            <person name="Schmidtheini T."/>
            <person name="Reichert B."/>
            <person name="Portetelle D."/>
            <person name="Perez-Alonso M."/>
            <person name="Boutry M."/>
            <person name="Bancroft I."/>
            <person name="Vos P."/>
            <person name="Hoheisel J."/>
            <person name="Zimmermann W."/>
            <person name="Wedler H."/>
            <person name="Ridley P."/>
            <person name="Langham S.-A."/>
            <person name="McCullagh B."/>
            <person name="Bilham L."/>
            <person name="Robben J."/>
            <person name="van der Schueren J."/>
            <person name="Grymonprez B."/>
            <person name="Chuang Y.-J."/>
            <person name="Vandenbussche F."/>
            <person name="Braeken M."/>
            <person name="Weltjens I."/>
            <person name="Voet M."/>
            <person name="Bastiaens I."/>
            <person name="Aert R."/>
            <person name="Defoor E."/>
            <person name="Weitzenegger T."/>
            <person name="Bothe G."/>
            <person name="Ramsperger U."/>
            <person name="Hilbert H."/>
            <person name="Braun M."/>
            <person name="Holzer E."/>
            <person name="Brandt A."/>
            <person name="Peters S."/>
            <person name="van Staveren M."/>
            <person name="Dirkse W."/>
            <person name="Mooijman P."/>
            <person name="Klein Lankhorst R."/>
            <person name="Rose M."/>
            <person name="Hauf J."/>
            <person name="Koetter P."/>
            <person name="Berneiser S."/>
            <person name="Hempel S."/>
            <person name="Feldpausch M."/>
            <person name="Lamberth S."/>
            <person name="Van den Daele H."/>
            <person name="De Keyser A."/>
            <person name="Buysshaert C."/>
            <person name="Gielen J."/>
            <person name="Villarroel R."/>
            <person name="De Clercq R."/>
            <person name="van Montagu M."/>
            <person name="Rogers J."/>
            <person name="Cronin A."/>
            <person name="Quail M.A."/>
            <person name="Bray-Allen S."/>
            <person name="Clark L."/>
            <person name="Doggett J."/>
            <person name="Hall S."/>
            <person name="Kay M."/>
            <person name="Lennard N."/>
            <person name="McLay K."/>
            <person name="Mayes R."/>
            <person name="Pettett A."/>
            <person name="Rajandream M.A."/>
            <person name="Lyne M."/>
            <person name="Benes V."/>
            <person name="Rechmann S."/>
            <person name="Borkova D."/>
            <person name="Bloecker H."/>
            <person name="Scharfe M."/>
            <person name="Grimm M."/>
            <person name="Loehnert T.-H."/>
            <person name="Dose S."/>
            <person name="de Haan M."/>
            <person name="Maarse A.C."/>
            <person name="Schaefer M."/>
            <person name="Mueller-Auer S."/>
            <person name="Gabel C."/>
            <person name="Fuchs M."/>
            <person name="Fartmann B."/>
            <person name="Granderath K."/>
            <person name="Dauner D."/>
            <person name="Herzl A."/>
            <person name="Neumann S."/>
            <person name="Argiriou A."/>
            <person name="Vitale D."/>
            <person name="Liguori R."/>
            <person name="Piravandi E."/>
            <person name="Massenet O."/>
            <person name="Quigley F."/>
            <person name="Clabauld G."/>
            <person name="Muendlein A."/>
            <person name="Felber R."/>
            <person name="Schnabl S."/>
            <person name="Hiller R."/>
            <person name="Schmidt W."/>
            <person name="Lecharny A."/>
            <person name="Aubourg S."/>
            <person name="Chefdor F."/>
            <person name="Cooke R."/>
            <person name="Berger C."/>
            <person name="Monfort A."/>
            <person name="Casacuberta E."/>
            <person name="Gibbons T."/>
            <person name="Weber N."/>
            <person name="Vandenbol M."/>
            <person name="Bargues M."/>
            <person name="Terol J."/>
            <person name="Torres A."/>
            <person name="Perez-Perez A."/>
            <person name="Purnelle B."/>
            <person name="Bent E."/>
            <person name="Johnson S."/>
            <person name="Tacon D."/>
            <person name="Jesse T."/>
            <person name="Heijnen L."/>
            <person name="Schwarz S."/>
            <person name="Scholler P."/>
            <person name="Heber S."/>
            <person name="Francs P."/>
            <person name="Bielke C."/>
            <person name="Frishman D."/>
            <person name="Haase D."/>
            <person name="Lemcke K."/>
            <person name="Mewes H.-W."/>
            <person name="Stocker S."/>
            <person name="Zaccaria P."/>
            <person name="Bevan M."/>
            <person name="Wilson R.K."/>
            <person name="de la Bastide M."/>
            <person name="Habermann K."/>
            <person name="Parnell L."/>
            <person name="Dedhia N."/>
            <person name="Gnoj L."/>
            <person name="Schutz K."/>
            <person name="Huang E."/>
            <person name="Spiegel L."/>
            <person name="Sekhon M."/>
            <person name="Murray J."/>
            <person name="Sheet P."/>
            <person name="Cordes M."/>
            <person name="Abu-Threideh J."/>
            <person name="Stoneking T."/>
            <person name="Kalicki J."/>
            <person name="Graves T."/>
            <person name="Harmon G."/>
            <person name="Edwards J."/>
            <person name="Latreille P."/>
            <person name="Courtney L."/>
            <person name="Cloud J."/>
            <person name="Abbott A."/>
            <person name="Scott K."/>
            <person name="Johnson D."/>
            <person name="Minx P."/>
            <person name="Bentley D."/>
            <person name="Fulton B."/>
            <person name="Miller N."/>
            <person name="Greco T."/>
            <person name="Kemp K."/>
            <person name="Kramer J."/>
            <person name="Fulton L."/>
            <person name="Mardis E."/>
            <person name="Dante M."/>
            <person name="Pepin K."/>
            <person name="Hillier L.W."/>
            <person name="Nelson J."/>
            <person name="Spieth J."/>
            <person name="Ryan E."/>
            <person name="Andrews S."/>
            <person name="Geisel C."/>
            <person name="Layman D."/>
            <person name="Du H."/>
            <person name="Ali J."/>
            <person name="Berghoff A."/>
            <person name="Jones K."/>
            <person name="Drone K."/>
            <person name="Cotton M."/>
            <person name="Joshu C."/>
            <person name="Antonoiu B."/>
            <person name="Zidanic M."/>
            <person name="Strong C."/>
            <person name="Sun H."/>
            <person name="Lamar B."/>
            <person name="Yordan C."/>
            <person name="Ma P."/>
            <person name="Zhong J."/>
            <person name="Preston R."/>
            <person name="Vil D."/>
            <person name="Shekher M."/>
            <person name="Matero A."/>
            <person name="Shah R."/>
            <person name="Swaby I.K."/>
            <person name="O'Shaughnessy A."/>
            <person name="Rodriguez M."/>
            <person name="Hoffman J."/>
            <person name="Till S."/>
            <person name="Granat S."/>
            <person name="Shohdy N."/>
            <person name="Hasegawa A."/>
            <person name="Hameed A."/>
            <person name="Lodhi M."/>
            <person name="Johnson A."/>
            <person name="Chen E."/>
            <person name="Marra M.A."/>
            <person name="Martienssen R."/>
            <person name="McCombie W.R."/>
        </authorList>
    </citation>
    <scope>NUCLEOTIDE SEQUENCE [LARGE SCALE GENOMIC DNA]</scope>
    <source>
        <strain>cv. Columbia</strain>
    </source>
</reference>
<reference key="3">
    <citation type="journal article" date="2017" name="Plant J.">
        <title>Araport11: a complete reannotation of the Arabidopsis thaliana reference genome.</title>
        <authorList>
            <person name="Cheng C.Y."/>
            <person name="Krishnakumar V."/>
            <person name="Chan A.P."/>
            <person name="Thibaud-Nissen F."/>
            <person name="Schobel S."/>
            <person name="Town C.D."/>
        </authorList>
    </citation>
    <scope>GENOME REANNOTATION</scope>
    <source>
        <strain>cv. Columbia</strain>
    </source>
</reference>
<reference key="4">
    <citation type="journal article" date="2003" name="Science">
        <title>Empirical analysis of transcriptional activity in the Arabidopsis genome.</title>
        <authorList>
            <person name="Yamada K."/>
            <person name="Lim J."/>
            <person name="Dale J.M."/>
            <person name="Chen H."/>
            <person name="Shinn P."/>
            <person name="Palm C.J."/>
            <person name="Southwick A.M."/>
            <person name="Wu H.C."/>
            <person name="Kim C.J."/>
            <person name="Nguyen M."/>
            <person name="Pham P.K."/>
            <person name="Cheuk R.F."/>
            <person name="Karlin-Newmann G."/>
            <person name="Liu S.X."/>
            <person name="Lam B."/>
            <person name="Sakano H."/>
            <person name="Wu T."/>
            <person name="Yu G."/>
            <person name="Miranda M."/>
            <person name="Quach H.L."/>
            <person name="Tripp M."/>
            <person name="Chang C.H."/>
            <person name="Lee J.M."/>
            <person name="Toriumi M.J."/>
            <person name="Chan M.M."/>
            <person name="Tang C.C."/>
            <person name="Onodera C.S."/>
            <person name="Deng J.M."/>
            <person name="Akiyama K."/>
            <person name="Ansari Y."/>
            <person name="Arakawa T."/>
            <person name="Banh J."/>
            <person name="Banno F."/>
            <person name="Bowser L."/>
            <person name="Brooks S.Y."/>
            <person name="Carninci P."/>
            <person name="Chao Q."/>
            <person name="Choy N."/>
            <person name="Enju A."/>
            <person name="Goldsmith A.D."/>
            <person name="Gurjal M."/>
            <person name="Hansen N.F."/>
            <person name="Hayashizaki Y."/>
            <person name="Johnson-Hopson C."/>
            <person name="Hsuan V.W."/>
            <person name="Iida K."/>
            <person name="Karnes M."/>
            <person name="Khan S."/>
            <person name="Koesema E."/>
            <person name="Ishida J."/>
            <person name="Jiang P.X."/>
            <person name="Jones T."/>
            <person name="Kawai J."/>
            <person name="Kamiya A."/>
            <person name="Meyers C."/>
            <person name="Nakajima M."/>
            <person name="Narusaka M."/>
            <person name="Seki M."/>
            <person name="Sakurai T."/>
            <person name="Satou M."/>
            <person name="Tamse R."/>
            <person name="Vaysberg M."/>
            <person name="Wallender E.K."/>
            <person name="Wong C."/>
            <person name="Yamamura Y."/>
            <person name="Yuan S."/>
            <person name="Shinozaki K."/>
            <person name="Davis R.W."/>
            <person name="Theologis A."/>
            <person name="Ecker J.R."/>
        </authorList>
    </citation>
    <scope>NUCLEOTIDE SEQUENCE [LARGE SCALE MRNA]</scope>
    <source>
        <strain>cv. Columbia</strain>
    </source>
</reference>
<reference key="5">
    <citation type="submission" date="2004-09" db="EMBL/GenBank/DDBJ databases">
        <title>Large-scale analysis of RIKEN Arabidopsis full-length (RAFL) cDNAs.</title>
        <authorList>
            <person name="Totoki Y."/>
            <person name="Seki M."/>
            <person name="Ishida J."/>
            <person name="Nakajima M."/>
            <person name="Enju A."/>
            <person name="Kamiya A."/>
            <person name="Narusaka M."/>
            <person name="Shin-i T."/>
            <person name="Nakagawa M."/>
            <person name="Sakamoto N."/>
            <person name="Oishi K."/>
            <person name="Kohara Y."/>
            <person name="Kobayashi M."/>
            <person name="Toyoda A."/>
            <person name="Sakaki Y."/>
            <person name="Sakurai T."/>
            <person name="Iida K."/>
            <person name="Akiyama K."/>
            <person name="Satou M."/>
            <person name="Toyoda T."/>
            <person name="Konagaya A."/>
            <person name="Carninci P."/>
            <person name="Kawai J."/>
            <person name="Hayashizaki Y."/>
            <person name="Shinozaki K."/>
        </authorList>
    </citation>
    <scope>NUCLEOTIDE SEQUENCE [LARGE SCALE MRNA]</scope>
    <source>
        <strain>cv. Columbia</strain>
    </source>
</reference>
<reference key="6">
    <citation type="submission" date="2002-03" db="EMBL/GenBank/DDBJ databases">
        <title>Full-length cDNA from Arabidopsis thaliana.</title>
        <authorList>
            <person name="Brover V.V."/>
            <person name="Troukhan M.E."/>
            <person name="Alexandrov N.A."/>
            <person name="Lu Y.-P."/>
            <person name="Flavell R.B."/>
            <person name="Feldmann K.A."/>
        </authorList>
    </citation>
    <scope>NUCLEOTIDE SEQUENCE [LARGE SCALE MRNA]</scope>
</reference>
<reference key="7">
    <citation type="journal article" date="2009" name="Plant Physiol.">
        <title>In-depth proteome analysis of Arabidopsis leaf peroxisomes combined with in vivo subcellular targeting verification indicates novel metabolic and regulatory functions of peroxisomes.</title>
        <authorList>
            <person name="Reumann S."/>
            <person name="Quan S."/>
            <person name="Aung K."/>
            <person name="Yang P."/>
            <person name="Manandhar-Shrestha K."/>
            <person name="Holbrook D."/>
            <person name="Linka N."/>
            <person name="Switzenberg R."/>
            <person name="Wilkerson C.G."/>
            <person name="Weber A.P."/>
            <person name="Olsen L.J."/>
            <person name="Hu J."/>
        </authorList>
    </citation>
    <scope>SUBCELLULAR LOCATION</scope>
</reference>
<reference key="8">
    <citation type="journal article" date="2010" name="FEBS Lett.">
        <title>Dual activity of certain HIT-proteins: A. thaliana Hint4 and C. elegans DcpS act on adenosine 5'-phosphosulfate as hydrolases (forming AMP) and as phosphorylases (forming ADP).</title>
        <authorList>
            <person name="Guranowski A."/>
            <person name="Wojdyla A.M."/>
            <person name="Zimny J."/>
            <person name="Wypijewska A."/>
            <person name="Kowalska J."/>
            <person name="Jemielity J."/>
            <person name="Davis R.E."/>
            <person name="Bieganowski P."/>
        </authorList>
    </citation>
    <scope>FUNCTION</scope>
    <scope>CATALYTIC ACTIVITY</scope>
    <scope>ACTIVITY REGULATION</scope>
    <scope>SUBUNIT</scope>
</reference>
<dbReference type="EC" id="2.7.7.5" evidence="4"/>
<dbReference type="EC" id="3.6.2.1" evidence="4"/>
<dbReference type="EMBL" id="Z97341">
    <property type="protein sequence ID" value="CAB10432.1"/>
    <property type="status" value="ALT_SEQ"/>
    <property type="molecule type" value="Genomic_DNA"/>
</dbReference>
<dbReference type="EMBL" id="AL161544">
    <property type="protein sequence ID" value="CAB78698.1"/>
    <property type="status" value="ALT_SEQ"/>
    <property type="molecule type" value="Genomic_DNA"/>
</dbReference>
<dbReference type="EMBL" id="CP002687">
    <property type="protein sequence ID" value="ANM67558.1"/>
    <property type="molecule type" value="Genomic_DNA"/>
</dbReference>
<dbReference type="EMBL" id="BT004792">
    <property type="protein sequence ID" value="AAO44058.1"/>
    <property type="molecule type" value="mRNA"/>
</dbReference>
<dbReference type="EMBL" id="AK175206">
    <property type="protein sequence ID" value="BAD42969.1"/>
    <property type="molecule type" value="mRNA"/>
</dbReference>
<dbReference type="EMBL" id="AK176221">
    <property type="protein sequence ID" value="BAD43984.1"/>
    <property type="molecule type" value="mRNA"/>
</dbReference>
<dbReference type="EMBL" id="AY088482">
    <property type="protein sequence ID" value="AAM66018.1"/>
    <property type="status" value="ALT_SEQ"/>
    <property type="molecule type" value="mRNA"/>
</dbReference>
<dbReference type="PIR" id="F71432">
    <property type="entry name" value="F71432"/>
</dbReference>
<dbReference type="RefSeq" id="NP_567507.1">
    <property type="nucleotide sequence ID" value="NM_117757.4"/>
</dbReference>
<dbReference type="SMR" id="Q84VV6"/>
<dbReference type="FunCoup" id="Q84VV6">
    <property type="interactions" value="2220"/>
</dbReference>
<dbReference type="STRING" id="3702.Q84VV6"/>
<dbReference type="PaxDb" id="3702-AT4G16566.1"/>
<dbReference type="ProteomicsDB" id="230194"/>
<dbReference type="EnsemblPlants" id="AT4G16566.3">
    <property type="protein sequence ID" value="AT4G16566.3"/>
    <property type="gene ID" value="AT4G16566"/>
</dbReference>
<dbReference type="GeneID" id="827357"/>
<dbReference type="Gramene" id="AT4G16566.3">
    <property type="protein sequence ID" value="AT4G16566.3"/>
    <property type="gene ID" value="AT4G16566"/>
</dbReference>
<dbReference type="KEGG" id="ath:AT4G16566"/>
<dbReference type="Araport" id="AT4G16566"/>
<dbReference type="TAIR" id="AT4G16566">
    <property type="gene designation" value="HINT4"/>
</dbReference>
<dbReference type="eggNOG" id="KOG1339">
    <property type="taxonomic scope" value="Eukaryota"/>
</dbReference>
<dbReference type="HOGENOM" id="CLU_056776_4_3_1"/>
<dbReference type="InParanoid" id="Q84VV6"/>
<dbReference type="OMA" id="EKKCIFC"/>
<dbReference type="BioCyc" id="MetaCyc:AT4G16566-MONOMER"/>
<dbReference type="BRENDA" id="2.7.7.5">
    <property type="organism ID" value="399"/>
</dbReference>
<dbReference type="PRO" id="PR:Q84VV6"/>
<dbReference type="Proteomes" id="UP000006548">
    <property type="component" value="Chromosome 4"/>
</dbReference>
<dbReference type="ExpressionAtlas" id="Q84VV6">
    <property type="expression patterns" value="baseline and differential"/>
</dbReference>
<dbReference type="GO" id="GO:0005829">
    <property type="term" value="C:cytosol"/>
    <property type="evidence" value="ECO:0007005"/>
    <property type="project" value="TAIR"/>
</dbReference>
<dbReference type="GO" id="GO:0005777">
    <property type="term" value="C:peroxisome"/>
    <property type="evidence" value="ECO:0000314"/>
    <property type="project" value="TAIR"/>
</dbReference>
<dbReference type="GO" id="GO:0047627">
    <property type="term" value="F:adenylylsulfatase activity"/>
    <property type="evidence" value="ECO:0000314"/>
    <property type="project" value="TAIR"/>
</dbReference>
<dbReference type="GO" id="GO:0000166">
    <property type="term" value="F:nucleotide binding"/>
    <property type="evidence" value="ECO:0007669"/>
    <property type="project" value="UniProtKB-KW"/>
</dbReference>
<dbReference type="GO" id="GO:0004780">
    <property type="term" value="F:sulfate adenylyltransferase (ADP) activity"/>
    <property type="evidence" value="ECO:0000314"/>
    <property type="project" value="TAIR"/>
</dbReference>
<dbReference type="GO" id="GO:0009150">
    <property type="term" value="P:purine ribonucleotide metabolic process"/>
    <property type="evidence" value="ECO:0000314"/>
    <property type="project" value="TAIR"/>
</dbReference>
<dbReference type="GO" id="GO:0006790">
    <property type="term" value="P:sulfur compound metabolic process"/>
    <property type="evidence" value="ECO:0000314"/>
    <property type="project" value="TAIR"/>
</dbReference>
<dbReference type="FunFam" id="3.30.428.10:FF:000036">
    <property type="entry name" value="Histidine triad nucleotide-binding 4"/>
    <property type="match status" value="1"/>
</dbReference>
<dbReference type="Gene3D" id="3.30.428.10">
    <property type="entry name" value="HIT-like"/>
    <property type="match status" value="1"/>
</dbReference>
<dbReference type="InterPro" id="IPR001310">
    <property type="entry name" value="Histidine_triad_HIT"/>
</dbReference>
<dbReference type="InterPro" id="IPR011146">
    <property type="entry name" value="HIT-like"/>
</dbReference>
<dbReference type="InterPro" id="IPR036265">
    <property type="entry name" value="HIT-like_sf"/>
</dbReference>
<dbReference type="PANTHER" id="PTHR12486:SF5">
    <property type="entry name" value="ADENOSINE 5'-MONOPHOSPHORAMIDASE HINT3"/>
    <property type="match status" value="1"/>
</dbReference>
<dbReference type="PANTHER" id="PTHR12486">
    <property type="entry name" value="APRATAXIN-RELATED"/>
    <property type="match status" value="1"/>
</dbReference>
<dbReference type="Pfam" id="PF11969">
    <property type="entry name" value="DcpS_C"/>
    <property type="match status" value="1"/>
</dbReference>
<dbReference type="PRINTS" id="PR00332">
    <property type="entry name" value="HISTRIAD"/>
</dbReference>
<dbReference type="SUPFAM" id="SSF54197">
    <property type="entry name" value="HIT-like"/>
    <property type="match status" value="1"/>
</dbReference>
<dbReference type="PROSITE" id="PS51084">
    <property type="entry name" value="HIT_2"/>
    <property type="match status" value="1"/>
</dbReference>
<feature type="chain" id="PRO_0000436748" description="Bifunctional adenosine 5'-phosphosulfate phosphorylase/adenylylsulfatase HINT4">
    <location>
        <begin position="1"/>
        <end position="146"/>
    </location>
</feature>
<feature type="domain" description="HIT" evidence="2">
    <location>
        <begin position="9"/>
        <end position="120"/>
    </location>
</feature>
<feature type="short sequence motif" description="Histidine triad motif" evidence="2">
    <location>
        <begin position="101"/>
        <end position="105"/>
    </location>
</feature>
<feature type="active site" description="Tele-AMP-histidine intermediate" evidence="1">
    <location>
        <position position="105"/>
    </location>
</feature>
<comment type="function">
    <text evidence="4">Possesses adenylylsulfatase activity in vitro, releasing AMP and sulfate from adenylyl sulfate. Also possesses adenosine 5'-phosphosulfate (APS) phosphorylase activity in vitro. Catalyzes the phosphorolysis of APS, leading to ADP and sulfate.</text>
</comment>
<comment type="catalytic activity">
    <reaction evidence="4">
        <text>sulfate + ADP + H(+) = adenosine 5'-phosphosulfate + phosphate</text>
        <dbReference type="Rhea" id="RHEA:16529"/>
        <dbReference type="ChEBI" id="CHEBI:15378"/>
        <dbReference type="ChEBI" id="CHEBI:16189"/>
        <dbReference type="ChEBI" id="CHEBI:43474"/>
        <dbReference type="ChEBI" id="CHEBI:58243"/>
        <dbReference type="ChEBI" id="CHEBI:456216"/>
        <dbReference type="EC" id="2.7.7.5"/>
    </reaction>
</comment>
<comment type="catalytic activity">
    <reaction evidence="4">
        <text>adenosine 5'-phosphosulfate + H2O = sulfate + AMP + 2 H(+)</text>
        <dbReference type="Rhea" id="RHEA:17041"/>
        <dbReference type="ChEBI" id="CHEBI:15377"/>
        <dbReference type="ChEBI" id="CHEBI:15378"/>
        <dbReference type="ChEBI" id="CHEBI:16189"/>
        <dbReference type="ChEBI" id="CHEBI:58243"/>
        <dbReference type="ChEBI" id="CHEBI:456215"/>
        <dbReference type="EC" id="3.6.2.1"/>
    </reaction>
</comment>
<comment type="activity regulation">
    <text evidence="4">The adenosine 5'-phosphosulfate phosphorylase activity is enhanced at low pH.</text>
</comment>
<comment type="subunit">
    <text evidence="4">Homodimer.</text>
</comment>
<comment type="subcellular location">
    <subcellularLocation>
        <location evidence="3">Peroxisome</location>
    </subcellularLocation>
</comment>
<comment type="sequence caution" evidence="6">
    <conflict type="erroneous termination">
        <sequence resource="EMBL-CDS" id="AAM66018"/>
    </conflict>
    <text>Extended C-terminus.</text>
</comment>
<comment type="sequence caution" evidence="6">
    <conflict type="erroneous gene model prediction">
        <sequence resource="EMBL-CDS" id="CAB10432"/>
    </conflict>
    <text>The predicted gene has been split into 3 genes: At4g16560, At4g16563 and At4g16566.</text>
</comment>
<comment type="sequence caution" evidence="6">
    <conflict type="erroneous gene model prediction">
        <sequence resource="EMBL-CDS" id="CAB78698"/>
    </conflict>
    <text>The predicted gene has been split into 3 genes: At4g16560, At4g16563 and At4g16566.</text>
</comment>
<keyword id="KW-0378">Hydrolase</keyword>
<keyword id="KW-0547">Nucleotide-binding</keyword>
<keyword id="KW-0548">Nucleotidyltransferase</keyword>
<keyword id="KW-0576">Peroxisome</keyword>
<keyword id="KW-1185">Reference proteome</keyword>
<keyword id="KW-0808">Transferase</keyword>